<reference key="1">
    <citation type="journal article" date="2009" name="Genome Biol.">
        <title>Genomic and genetic analyses of diversity and plant interactions of Pseudomonas fluorescens.</title>
        <authorList>
            <person name="Silby M.W."/>
            <person name="Cerdeno-Tarraga A.M."/>
            <person name="Vernikos G.S."/>
            <person name="Giddens S.R."/>
            <person name="Jackson R.W."/>
            <person name="Preston G.M."/>
            <person name="Zhang X.-X."/>
            <person name="Moon C.D."/>
            <person name="Gehrig S.M."/>
            <person name="Godfrey S.A.C."/>
            <person name="Knight C.G."/>
            <person name="Malone J.G."/>
            <person name="Robinson Z."/>
            <person name="Spiers A.J."/>
            <person name="Harris S."/>
            <person name="Challis G.L."/>
            <person name="Yaxley A.M."/>
            <person name="Harris D."/>
            <person name="Seeger K."/>
            <person name="Murphy L."/>
            <person name="Rutter S."/>
            <person name="Squares R."/>
            <person name="Quail M.A."/>
            <person name="Saunders E."/>
            <person name="Mavromatis K."/>
            <person name="Brettin T.S."/>
            <person name="Bentley S.D."/>
            <person name="Hothersall J."/>
            <person name="Stephens E."/>
            <person name="Thomas C.M."/>
            <person name="Parkhill J."/>
            <person name="Levy S.B."/>
            <person name="Rainey P.B."/>
            <person name="Thomson N.R."/>
        </authorList>
    </citation>
    <scope>NUCLEOTIDE SEQUENCE [LARGE SCALE GENOMIC DNA]</scope>
    <source>
        <strain>SBW25</strain>
    </source>
</reference>
<organism>
    <name type="scientific">Pseudomonas fluorescens (strain SBW25)</name>
    <dbReference type="NCBI Taxonomy" id="216595"/>
    <lineage>
        <taxon>Bacteria</taxon>
        <taxon>Pseudomonadati</taxon>
        <taxon>Pseudomonadota</taxon>
        <taxon>Gammaproteobacteria</taxon>
        <taxon>Pseudomonadales</taxon>
        <taxon>Pseudomonadaceae</taxon>
        <taxon>Pseudomonas</taxon>
    </lineage>
</organism>
<name>MINE_PSEFS</name>
<keyword id="KW-0131">Cell cycle</keyword>
<keyword id="KW-0132">Cell division</keyword>
<proteinExistence type="inferred from homology"/>
<feature type="chain" id="PRO_1000204685" description="Cell division topological specificity factor">
    <location>
        <begin position="1"/>
        <end position="84"/>
    </location>
</feature>
<sequence length="84" mass="9537">MKFLDFFRANKKPSTASVAKERLQIIVAHERGQRSTPDYLPALQKELVEVIRKYVNIGNDDVHVALENDGSCSILELNITLPDR</sequence>
<accession>C3K0D5</accession>
<comment type="function">
    <text evidence="1">Prevents the cell division inhibition by proteins MinC and MinD at internal division sites while permitting inhibition at polar sites. This ensures cell division at the proper site by restricting the formation of a division septum at the midpoint of the long axis of the cell.</text>
</comment>
<comment type="similarity">
    <text evidence="1">Belongs to the MinE family.</text>
</comment>
<evidence type="ECO:0000255" key="1">
    <source>
        <dbReference type="HAMAP-Rule" id="MF_00262"/>
    </source>
</evidence>
<dbReference type="EMBL" id="AM181176">
    <property type="protein sequence ID" value="CAY50997.1"/>
    <property type="molecule type" value="Genomic_DNA"/>
</dbReference>
<dbReference type="RefSeq" id="WP_003175252.1">
    <property type="nucleotide sequence ID" value="NC_012660.1"/>
</dbReference>
<dbReference type="SMR" id="C3K0D5"/>
<dbReference type="STRING" id="294.SRM1_01771"/>
<dbReference type="GeneID" id="97824582"/>
<dbReference type="eggNOG" id="COG0851">
    <property type="taxonomic scope" value="Bacteria"/>
</dbReference>
<dbReference type="HOGENOM" id="CLU_137929_2_1_6"/>
<dbReference type="OrthoDB" id="9802655at2"/>
<dbReference type="GO" id="GO:0051301">
    <property type="term" value="P:cell division"/>
    <property type="evidence" value="ECO:0007669"/>
    <property type="project" value="UniProtKB-KW"/>
</dbReference>
<dbReference type="GO" id="GO:0032955">
    <property type="term" value="P:regulation of division septum assembly"/>
    <property type="evidence" value="ECO:0007669"/>
    <property type="project" value="InterPro"/>
</dbReference>
<dbReference type="FunFam" id="3.30.1070.10:FF:000001">
    <property type="entry name" value="Cell division topological specificity factor"/>
    <property type="match status" value="1"/>
</dbReference>
<dbReference type="Gene3D" id="3.30.1070.10">
    <property type="entry name" value="Cell division topological specificity factor MinE"/>
    <property type="match status" value="1"/>
</dbReference>
<dbReference type="HAMAP" id="MF_00262">
    <property type="entry name" value="MinE"/>
    <property type="match status" value="1"/>
</dbReference>
<dbReference type="InterPro" id="IPR005527">
    <property type="entry name" value="MinE"/>
</dbReference>
<dbReference type="InterPro" id="IPR036707">
    <property type="entry name" value="MinE_sf"/>
</dbReference>
<dbReference type="NCBIfam" id="TIGR01215">
    <property type="entry name" value="minE"/>
    <property type="match status" value="1"/>
</dbReference>
<dbReference type="NCBIfam" id="NF001422">
    <property type="entry name" value="PRK00296.1"/>
    <property type="match status" value="1"/>
</dbReference>
<dbReference type="NCBIfam" id="NF010595">
    <property type="entry name" value="PRK13989.1"/>
    <property type="match status" value="1"/>
</dbReference>
<dbReference type="Pfam" id="PF03776">
    <property type="entry name" value="MinE"/>
    <property type="match status" value="1"/>
</dbReference>
<dbReference type="SUPFAM" id="SSF55229">
    <property type="entry name" value="Cell division protein MinE topological specificity domain"/>
    <property type="match status" value="1"/>
</dbReference>
<protein>
    <recommendedName>
        <fullName evidence="1">Cell division topological specificity factor</fullName>
    </recommendedName>
</protein>
<gene>
    <name evidence="1" type="primary">minE</name>
    <name type="ordered locus">PFLU_4371</name>
</gene>